<accession>Q9D7M8</accession>
<accession>Q6ZWW0</accession>
<accession>Q78KE6</accession>
<organism>
    <name type="scientific">Mus musculus</name>
    <name type="common">Mouse</name>
    <dbReference type="NCBI Taxonomy" id="10090"/>
    <lineage>
        <taxon>Eukaryota</taxon>
        <taxon>Metazoa</taxon>
        <taxon>Chordata</taxon>
        <taxon>Craniata</taxon>
        <taxon>Vertebrata</taxon>
        <taxon>Euteleostomi</taxon>
        <taxon>Mammalia</taxon>
        <taxon>Eutheria</taxon>
        <taxon>Euarchontoglires</taxon>
        <taxon>Glires</taxon>
        <taxon>Rodentia</taxon>
        <taxon>Myomorpha</taxon>
        <taxon>Muroidea</taxon>
        <taxon>Muridae</taxon>
        <taxon>Murinae</taxon>
        <taxon>Mus</taxon>
        <taxon>Mus</taxon>
    </lineage>
</organism>
<keyword id="KW-0240">DNA-directed RNA polymerase</keyword>
<keyword id="KW-0539">Nucleus</keyword>
<keyword id="KW-1185">Reference proteome</keyword>
<keyword id="KW-0804">Transcription</keyword>
<feature type="chain" id="PRO_0000073982" description="DNA-directed RNA polymerase II subunit RPB4">
    <location>
        <begin position="1"/>
        <end position="142"/>
    </location>
</feature>
<name>RPB4_MOUSE</name>
<evidence type="ECO:0000250" key="1">
    <source>
        <dbReference type="UniProtKB" id="O15514"/>
    </source>
</evidence>
<evidence type="ECO:0000250" key="2">
    <source>
        <dbReference type="UniProtKB" id="P20433"/>
    </source>
</evidence>
<evidence type="ECO:0000305" key="3"/>
<proteinExistence type="evidence at protein level"/>
<dbReference type="EMBL" id="AK011600">
    <property type="protein sequence ID" value="BAB27725.1"/>
    <property type="molecule type" value="mRNA"/>
</dbReference>
<dbReference type="EMBL" id="BC004810">
    <property type="protein sequence ID" value="AAH04810.1"/>
    <property type="status" value="ALT_INIT"/>
    <property type="molecule type" value="mRNA"/>
</dbReference>
<dbReference type="CCDS" id="CCDS29111.1"/>
<dbReference type="RefSeq" id="NP_081278.1">
    <property type="nucleotide sequence ID" value="NM_027002.4"/>
</dbReference>
<dbReference type="RefSeq" id="NP_081377.1">
    <property type="nucleotide sequence ID" value="NM_027101.2"/>
</dbReference>
<dbReference type="SMR" id="Q9D7M8"/>
<dbReference type="BioGRID" id="213312">
    <property type="interactions" value="11"/>
</dbReference>
<dbReference type="FunCoup" id="Q9D7M8">
    <property type="interactions" value="4770"/>
</dbReference>
<dbReference type="IntAct" id="Q9D7M8">
    <property type="interactions" value="2"/>
</dbReference>
<dbReference type="MINT" id="Q9D7M8"/>
<dbReference type="STRING" id="10090.ENSMUSP00000025106"/>
<dbReference type="GlyGen" id="Q9D7M8">
    <property type="glycosylation" value="2 sites, 2 N-linked glycans (2 sites)"/>
</dbReference>
<dbReference type="iPTMnet" id="Q9D7M8"/>
<dbReference type="PhosphoSitePlus" id="Q9D7M8"/>
<dbReference type="REPRODUCTION-2DPAGE" id="Q9D7M8"/>
<dbReference type="PaxDb" id="10090-ENSMUSP00000025106"/>
<dbReference type="PeptideAtlas" id="Q9D7M8"/>
<dbReference type="ProteomicsDB" id="300476"/>
<dbReference type="Pumba" id="Q9D7M8"/>
<dbReference type="Antibodypedia" id="33469">
    <property type="antibodies" value="191 antibodies from 29 providers"/>
</dbReference>
<dbReference type="DNASU" id="69241"/>
<dbReference type="Ensembl" id="ENSMUST00000025106.5">
    <property type="protein sequence ID" value="ENSMUSP00000025106.4"/>
    <property type="gene ID" value="ENSMUSG00000024258.5"/>
</dbReference>
<dbReference type="GeneID" id="69241"/>
<dbReference type="KEGG" id="mmu:69241"/>
<dbReference type="UCSC" id="uc008eim.2">
    <property type="organism name" value="mouse"/>
</dbReference>
<dbReference type="AGR" id="MGI:1916491"/>
<dbReference type="CTD" id="5433"/>
<dbReference type="MGI" id="MGI:1916491">
    <property type="gene designation" value="Polr2d"/>
</dbReference>
<dbReference type="VEuPathDB" id="HostDB:ENSMUSG00000024258"/>
<dbReference type="eggNOG" id="KOG2351">
    <property type="taxonomic scope" value="Eukaryota"/>
</dbReference>
<dbReference type="GeneTree" id="ENSGT00390000004912"/>
<dbReference type="HOGENOM" id="CLU_110332_2_1_1"/>
<dbReference type="InParanoid" id="Q9D7M8"/>
<dbReference type="OMA" id="HRKTQNE"/>
<dbReference type="OrthoDB" id="2186918at2759"/>
<dbReference type="PhylomeDB" id="Q9D7M8"/>
<dbReference type="TreeFam" id="TF103039"/>
<dbReference type="Reactome" id="R-MMU-112382">
    <property type="pathway name" value="Formation of RNA Pol II elongation complex"/>
</dbReference>
<dbReference type="Reactome" id="R-MMU-113418">
    <property type="pathway name" value="Formation of the Early Elongation Complex"/>
</dbReference>
<dbReference type="Reactome" id="R-MMU-674695">
    <property type="pathway name" value="RNA Polymerase II Pre-transcription Events"/>
</dbReference>
<dbReference type="Reactome" id="R-MMU-6781823">
    <property type="pathway name" value="Formation of TC-NER Pre-Incision Complex"/>
</dbReference>
<dbReference type="Reactome" id="R-MMU-6782135">
    <property type="pathway name" value="Dual incision in TC-NER"/>
</dbReference>
<dbReference type="Reactome" id="R-MMU-6782210">
    <property type="pathway name" value="Gap-filling DNA repair synthesis and ligation in TC-NER"/>
</dbReference>
<dbReference type="Reactome" id="R-MMU-6796648">
    <property type="pathway name" value="TP53 Regulates Transcription of DNA Repair Genes"/>
</dbReference>
<dbReference type="Reactome" id="R-MMU-6803529">
    <property type="pathway name" value="FGFR2 alternative splicing"/>
</dbReference>
<dbReference type="Reactome" id="R-MMU-6807505">
    <property type="pathway name" value="RNA polymerase II transcribes snRNA genes"/>
</dbReference>
<dbReference type="Reactome" id="R-MMU-72086">
    <property type="pathway name" value="mRNA Capping"/>
</dbReference>
<dbReference type="Reactome" id="R-MMU-72163">
    <property type="pathway name" value="mRNA Splicing - Major Pathway"/>
</dbReference>
<dbReference type="Reactome" id="R-MMU-72165">
    <property type="pathway name" value="mRNA Splicing - Minor Pathway"/>
</dbReference>
<dbReference type="Reactome" id="R-MMU-72203">
    <property type="pathway name" value="Processing of Capped Intron-Containing Pre-mRNA"/>
</dbReference>
<dbReference type="Reactome" id="R-MMU-73776">
    <property type="pathway name" value="RNA Polymerase II Promoter Escape"/>
</dbReference>
<dbReference type="Reactome" id="R-MMU-73779">
    <property type="pathway name" value="RNA Polymerase II Transcription Pre-Initiation And Promoter Opening"/>
</dbReference>
<dbReference type="Reactome" id="R-MMU-75953">
    <property type="pathway name" value="RNA Polymerase II Transcription Initiation"/>
</dbReference>
<dbReference type="Reactome" id="R-MMU-75955">
    <property type="pathway name" value="RNA Polymerase II Transcription Elongation"/>
</dbReference>
<dbReference type="Reactome" id="R-MMU-76042">
    <property type="pathway name" value="RNA Polymerase II Transcription Initiation And Promoter Clearance"/>
</dbReference>
<dbReference type="Reactome" id="R-MMU-77075">
    <property type="pathway name" value="RNA Pol II CTD phosphorylation and interaction with CE"/>
</dbReference>
<dbReference type="Reactome" id="R-MMU-9018519">
    <property type="pathway name" value="Estrogen-dependent gene expression"/>
</dbReference>
<dbReference type="BioGRID-ORCS" id="69241">
    <property type="hits" value="24 hits in 79 CRISPR screens"/>
</dbReference>
<dbReference type="ChiTaRS" id="Polr2d">
    <property type="organism name" value="mouse"/>
</dbReference>
<dbReference type="PRO" id="PR:Q9D7M8"/>
<dbReference type="Proteomes" id="UP000000589">
    <property type="component" value="Chromosome 18"/>
</dbReference>
<dbReference type="RNAct" id="Q9D7M8">
    <property type="molecule type" value="protein"/>
</dbReference>
<dbReference type="Bgee" id="ENSMUSG00000024258">
    <property type="expression patterns" value="Expressed in primary oocyte and 258 other cell types or tissues"/>
</dbReference>
<dbReference type="ExpressionAtlas" id="Q9D7M8">
    <property type="expression patterns" value="baseline and differential"/>
</dbReference>
<dbReference type="GO" id="GO:0005829">
    <property type="term" value="C:cytosol"/>
    <property type="evidence" value="ECO:0007669"/>
    <property type="project" value="Ensembl"/>
</dbReference>
<dbReference type="GO" id="GO:0016607">
    <property type="term" value="C:nuclear speck"/>
    <property type="evidence" value="ECO:0007669"/>
    <property type="project" value="Ensembl"/>
</dbReference>
<dbReference type="GO" id="GO:0005654">
    <property type="term" value="C:nucleoplasm"/>
    <property type="evidence" value="ECO:0000304"/>
    <property type="project" value="Reactome"/>
</dbReference>
<dbReference type="GO" id="GO:0005634">
    <property type="term" value="C:nucleus"/>
    <property type="evidence" value="ECO:0000250"/>
    <property type="project" value="UniProtKB"/>
</dbReference>
<dbReference type="GO" id="GO:0005665">
    <property type="term" value="C:RNA polymerase II, core complex"/>
    <property type="evidence" value="ECO:0000250"/>
    <property type="project" value="UniProtKB"/>
</dbReference>
<dbReference type="GO" id="GO:0000166">
    <property type="term" value="F:nucleotide binding"/>
    <property type="evidence" value="ECO:0007669"/>
    <property type="project" value="InterPro"/>
</dbReference>
<dbReference type="GO" id="GO:0006352">
    <property type="term" value="P:DNA-templated transcription initiation"/>
    <property type="evidence" value="ECO:0007669"/>
    <property type="project" value="InterPro"/>
</dbReference>
<dbReference type="GO" id="GO:0006366">
    <property type="term" value="P:transcription by RNA polymerase II"/>
    <property type="evidence" value="ECO:0000250"/>
    <property type="project" value="UniProtKB"/>
</dbReference>
<dbReference type="FunFam" id="1.20.1250.40:FF:000001">
    <property type="entry name" value="DNA-directed RNA polymerase II subunit RPB4"/>
    <property type="match status" value="1"/>
</dbReference>
<dbReference type="Gene3D" id="1.20.1250.40">
    <property type="match status" value="1"/>
</dbReference>
<dbReference type="InterPro" id="IPR010997">
    <property type="entry name" value="HRDC-like_sf"/>
</dbReference>
<dbReference type="InterPro" id="IPR006590">
    <property type="entry name" value="RNA_pol_Rpb4/RPC9_core"/>
</dbReference>
<dbReference type="InterPro" id="IPR045222">
    <property type="entry name" value="Rpb4-like"/>
</dbReference>
<dbReference type="InterPro" id="IPR005574">
    <property type="entry name" value="Rpb4/RPC9"/>
</dbReference>
<dbReference type="InterPro" id="IPR038324">
    <property type="entry name" value="Rpb4/RPC9_sf"/>
</dbReference>
<dbReference type="PANTHER" id="PTHR21297">
    <property type="entry name" value="DNA-DIRECTED RNA POLYMERASE II"/>
    <property type="match status" value="1"/>
</dbReference>
<dbReference type="Pfam" id="PF03874">
    <property type="entry name" value="RNA_pol_Rpb4"/>
    <property type="match status" value="1"/>
</dbReference>
<dbReference type="SMART" id="SM00657">
    <property type="entry name" value="RPOL4c"/>
    <property type="match status" value="1"/>
</dbReference>
<dbReference type="SUPFAM" id="SSF47819">
    <property type="entry name" value="HRDC-like"/>
    <property type="match status" value="1"/>
</dbReference>
<reference key="1">
    <citation type="journal article" date="2005" name="Science">
        <title>The transcriptional landscape of the mammalian genome.</title>
        <authorList>
            <person name="Carninci P."/>
            <person name="Kasukawa T."/>
            <person name="Katayama S."/>
            <person name="Gough J."/>
            <person name="Frith M.C."/>
            <person name="Maeda N."/>
            <person name="Oyama R."/>
            <person name="Ravasi T."/>
            <person name="Lenhard B."/>
            <person name="Wells C."/>
            <person name="Kodzius R."/>
            <person name="Shimokawa K."/>
            <person name="Bajic V.B."/>
            <person name="Brenner S.E."/>
            <person name="Batalov S."/>
            <person name="Forrest A.R."/>
            <person name="Zavolan M."/>
            <person name="Davis M.J."/>
            <person name="Wilming L.G."/>
            <person name="Aidinis V."/>
            <person name="Allen J.E."/>
            <person name="Ambesi-Impiombato A."/>
            <person name="Apweiler R."/>
            <person name="Aturaliya R.N."/>
            <person name="Bailey T.L."/>
            <person name="Bansal M."/>
            <person name="Baxter L."/>
            <person name="Beisel K.W."/>
            <person name="Bersano T."/>
            <person name="Bono H."/>
            <person name="Chalk A.M."/>
            <person name="Chiu K.P."/>
            <person name="Choudhary V."/>
            <person name="Christoffels A."/>
            <person name="Clutterbuck D.R."/>
            <person name="Crowe M.L."/>
            <person name="Dalla E."/>
            <person name="Dalrymple B.P."/>
            <person name="de Bono B."/>
            <person name="Della Gatta G."/>
            <person name="di Bernardo D."/>
            <person name="Down T."/>
            <person name="Engstrom P."/>
            <person name="Fagiolini M."/>
            <person name="Faulkner G."/>
            <person name="Fletcher C.F."/>
            <person name="Fukushima T."/>
            <person name="Furuno M."/>
            <person name="Futaki S."/>
            <person name="Gariboldi M."/>
            <person name="Georgii-Hemming P."/>
            <person name="Gingeras T.R."/>
            <person name="Gojobori T."/>
            <person name="Green R.E."/>
            <person name="Gustincich S."/>
            <person name="Harbers M."/>
            <person name="Hayashi Y."/>
            <person name="Hensch T.K."/>
            <person name="Hirokawa N."/>
            <person name="Hill D."/>
            <person name="Huminiecki L."/>
            <person name="Iacono M."/>
            <person name="Ikeo K."/>
            <person name="Iwama A."/>
            <person name="Ishikawa T."/>
            <person name="Jakt M."/>
            <person name="Kanapin A."/>
            <person name="Katoh M."/>
            <person name="Kawasawa Y."/>
            <person name="Kelso J."/>
            <person name="Kitamura H."/>
            <person name="Kitano H."/>
            <person name="Kollias G."/>
            <person name="Krishnan S.P."/>
            <person name="Kruger A."/>
            <person name="Kummerfeld S.K."/>
            <person name="Kurochkin I.V."/>
            <person name="Lareau L.F."/>
            <person name="Lazarevic D."/>
            <person name="Lipovich L."/>
            <person name="Liu J."/>
            <person name="Liuni S."/>
            <person name="McWilliam S."/>
            <person name="Madan Babu M."/>
            <person name="Madera M."/>
            <person name="Marchionni L."/>
            <person name="Matsuda H."/>
            <person name="Matsuzawa S."/>
            <person name="Miki H."/>
            <person name="Mignone F."/>
            <person name="Miyake S."/>
            <person name="Morris K."/>
            <person name="Mottagui-Tabar S."/>
            <person name="Mulder N."/>
            <person name="Nakano N."/>
            <person name="Nakauchi H."/>
            <person name="Ng P."/>
            <person name="Nilsson R."/>
            <person name="Nishiguchi S."/>
            <person name="Nishikawa S."/>
            <person name="Nori F."/>
            <person name="Ohara O."/>
            <person name="Okazaki Y."/>
            <person name="Orlando V."/>
            <person name="Pang K.C."/>
            <person name="Pavan W.J."/>
            <person name="Pavesi G."/>
            <person name="Pesole G."/>
            <person name="Petrovsky N."/>
            <person name="Piazza S."/>
            <person name="Reed J."/>
            <person name="Reid J.F."/>
            <person name="Ring B.Z."/>
            <person name="Ringwald M."/>
            <person name="Rost B."/>
            <person name="Ruan Y."/>
            <person name="Salzberg S.L."/>
            <person name="Sandelin A."/>
            <person name="Schneider C."/>
            <person name="Schoenbach C."/>
            <person name="Sekiguchi K."/>
            <person name="Semple C.A."/>
            <person name="Seno S."/>
            <person name="Sessa L."/>
            <person name="Sheng Y."/>
            <person name="Shibata Y."/>
            <person name="Shimada H."/>
            <person name="Shimada K."/>
            <person name="Silva D."/>
            <person name="Sinclair B."/>
            <person name="Sperling S."/>
            <person name="Stupka E."/>
            <person name="Sugiura K."/>
            <person name="Sultana R."/>
            <person name="Takenaka Y."/>
            <person name="Taki K."/>
            <person name="Tammoja K."/>
            <person name="Tan S.L."/>
            <person name="Tang S."/>
            <person name="Taylor M.S."/>
            <person name="Tegner J."/>
            <person name="Teichmann S.A."/>
            <person name="Ueda H.R."/>
            <person name="van Nimwegen E."/>
            <person name="Verardo R."/>
            <person name="Wei C.L."/>
            <person name="Yagi K."/>
            <person name="Yamanishi H."/>
            <person name="Zabarovsky E."/>
            <person name="Zhu S."/>
            <person name="Zimmer A."/>
            <person name="Hide W."/>
            <person name="Bult C."/>
            <person name="Grimmond S.M."/>
            <person name="Teasdale R.D."/>
            <person name="Liu E.T."/>
            <person name="Brusic V."/>
            <person name="Quackenbush J."/>
            <person name="Wahlestedt C."/>
            <person name="Mattick J.S."/>
            <person name="Hume D.A."/>
            <person name="Kai C."/>
            <person name="Sasaki D."/>
            <person name="Tomaru Y."/>
            <person name="Fukuda S."/>
            <person name="Kanamori-Katayama M."/>
            <person name="Suzuki M."/>
            <person name="Aoki J."/>
            <person name="Arakawa T."/>
            <person name="Iida J."/>
            <person name="Imamura K."/>
            <person name="Itoh M."/>
            <person name="Kato T."/>
            <person name="Kawaji H."/>
            <person name="Kawagashira N."/>
            <person name="Kawashima T."/>
            <person name="Kojima M."/>
            <person name="Kondo S."/>
            <person name="Konno H."/>
            <person name="Nakano K."/>
            <person name="Ninomiya N."/>
            <person name="Nishio T."/>
            <person name="Okada M."/>
            <person name="Plessy C."/>
            <person name="Shibata K."/>
            <person name="Shiraki T."/>
            <person name="Suzuki S."/>
            <person name="Tagami M."/>
            <person name="Waki K."/>
            <person name="Watahiki A."/>
            <person name="Okamura-Oho Y."/>
            <person name="Suzuki H."/>
            <person name="Kawai J."/>
            <person name="Hayashizaki Y."/>
        </authorList>
    </citation>
    <scope>NUCLEOTIDE SEQUENCE [LARGE SCALE MRNA]</scope>
    <source>
        <strain>C57BL/6J</strain>
        <tissue>Embryo</tissue>
    </source>
</reference>
<reference key="2">
    <citation type="journal article" date="2004" name="Genome Res.">
        <title>The status, quality, and expansion of the NIH full-length cDNA project: the Mammalian Gene Collection (MGC).</title>
        <authorList>
            <consortium name="The MGC Project Team"/>
        </authorList>
    </citation>
    <scope>NUCLEOTIDE SEQUENCE [LARGE SCALE MRNA] OF 3-142</scope>
</reference>
<reference key="3">
    <citation type="journal article" date="2010" name="Cell">
        <title>A tissue-specific atlas of mouse protein phosphorylation and expression.</title>
        <authorList>
            <person name="Huttlin E.L."/>
            <person name="Jedrychowski M.P."/>
            <person name="Elias J.E."/>
            <person name="Goswami T."/>
            <person name="Rad R."/>
            <person name="Beausoleil S.A."/>
            <person name="Villen J."/>
            <person name="Haas W."/>
            <person name="Sowa M.E."/>
            <person name="Gygi S.P."/>
        </authorList>
    </citation>
    <scope>IDENTIFICATION BY MASS SPECTROMETRY [LARGE SCALE ANALYSIS]</scope>
    <source>
        <tissue>Brain</tissue>
        <tissue>Kidney</tissue>
        <tissue>Liver</tissue>
        <tissue>Lung</tissue>
        <tissue>Spleen</tissue>
        <tissue>Testis</tissue>
    </source>
</reference>
<sequence length="142" mass="16311">MAAGGSDPRAGDVEEDASQLIFPKEFETAETLLNSEVHMLLEHRKQQNESAEDEQELSEVFMKTLNYTARFSRFKNRETIASVRSLLLQKKLHKFELACLANLCPETAEESKALIPSLEGRFEDEELQQILDDIQTKRSFQY</sequence>
<comment type="function">
    <text evidence="1 2">Core component of RNA polymerase II (Pol II), a DNA-dependent RNA polymerase which synthesizes mRNA precursors and many functional non-coding RNAs using the four ribonucleoside triphosphates as substrates. Pol II is the central component of the basal RNA polymerase II transcription machinery. It is composed of mobile elements that move relative to each other. POLR2D/RPB4 is part of a subcomplex with POLR2G/RPB7 that binds to a pocket formed by POLR2A/RPB1, POLR2B/RPB2 and POLR2F/RPABC2 at the base of the clamp element. The POLR2D/RPB4-POLR2G/RPB7 subcomplex seems to lock the clamp via POLR2G/RPB7 in the closed conformation thus preventing double-stranded DNA to enter the active site cleft. The POLR2D/RPB4-POLR2G/RPB7 subcomplex binds single-stranded DNA and RNA.</text>
</comment>
<comment type="subunit">
    <text evidence="1">Component of the RNA polymerase II (Pol II) core complex consisting of 12 subunits: a ten-subunit catalytic core composed of POLR2A/RPB1, POLR2B/RPB2, POLR2C/RPB3, POLR2I/RPB9, POLR2J/RPB11, POLR2E/RPABC1, POLR2F/RPABC2, POLR2H/RPABC3, POLR2K/RPABC4 and POLR2L/RPABC5 and a mobile stalk composed of two subunits POLR2D/RPB4 and POLR2G/RPB7, protruding from the core and functioning primarily in transcription initiation. Part of Pol II(G) complex, in which Pol II core associates with an additional subunit POLR2M; unlike conventional Pol II, Pol II(G) functions as a transcriptional repressor. Part of TBP-based Pol II pre-initiation complex (PIC), in which Pol II core assembles with general transcription factors and other specific initiation factors including GTF2E1, GTF2E2, GTF2F1, GTF2F2, TCEA1, ERCC2, ERCC3, GTF2H2, GTF2H3, GTF2H4, GTF2H5, GTF2A1, GTF2A2, GTF2B and TBP; this large multi-subunit PIC complex mediates DNA unwinding and targets Pol II core to the transcription start site where the first phosphodiester bond forms.</text>
</comment>
<comment type="subcellular location">
    <subcellularLocation>
        <location evidence="1">Nucleus</location>
    </subcellularLocation>
</comment>
<comment type="similarity">
    <text evidence="3">Belongs to the eukaryotic RPB4 RNA polymerase subunit family.</text>
</comment>
<comment type="sequence caution" evidence="3">
    <conflict type="erroneous initiation">
        <sequence resource="EMBL-CDS" id="AAH04810"/>
    </conflict>
</comment>
<gene>
    <name type="primary">Polr2d</name>
</gene>
<protein>
    <recommendedName>
        <fullName>DNA-directed RNA polymerase II subunit RPB4</fullName>
        <shortName>RNA polymerase II subunit B4</shortName>
    </recommendedName>
    <alternativeName>
        <fullName>DNA-directed RNA polymerase II subunit D</fullName>
    </alternativeName>
</protein>